<name>DGOD_ECO55</name>
<comment type="function">
    <text evidence="2">Catalyzes the dehydration of D-galactonate to 2-keto-3-deoxy-D-galactonate.</text>
</comment>
<comment type="catalytic activity">
    <reaction evidence="2">
        <text>D-galactonate = 2-dehydro-3-deoxy-D-galactonate + H2O</text>
        <dbReference type="Rhea" id="RHEA:18649"/>
        <dbReference type="ChEBI" id="CHEBI:12931"/>
        <dbReference type="ChEBI" id="CHEBI:15377"/>
        <dbReference type="ChEBI" id="CHEBI:57989"/>
        <dbReference type="EC" id="4.2.1.6"/>
    </reaction>
</comment>
<comment type="cofactor">
    <cofactor evidence="2">
        <name>Mg(2+)</name>
        <dbReference type="ChEBI" id="CHEBI:18420"/>
    </cofactor>
    <text evidence="2">Binds 1 Mg(2+) ion per subunit.</text>
</comment>
<comment type="pathway">
    <text evidence="2">Carbohydrate acid metabolism; D-galactonate degradation; D-glyceraldehyde 3-phosphate and pyruvate from D-galactonate: step 1/3.</text>
</comment>
<comment type="miscellaneous">
    <text evidence="2">Reaction proceeds via an anti dehydration.</text>
</comment>
<comment type="similarity">
    <text evidence="2">Belongs to the mandelate racemase/muconate lactonizing enzyme family. GalD subfamily.</text>
</comment>
<protein>
    <recommendedName>
        <fullName evidence="2">D-galactonate dehydratase</fullName>
        <shortName evidence="2">GalD</shortName>
        <ecNumber evidence="2">4.2.1.6</ecNumber>
    </recommendedName>
</protein>
<keyword id="KW-0456">Lyase</keyword>
<keyword id="KW-0460">Magnesium</keyword>
<keyword id="KW-0479">Metal-binding</keyword>
<keyword id="KW-1185">Reference proteome</keyword>
<proteinExistence type="inferred from homology"/>
<organism>
    <name type="scientific">Escherichia coli (strain 55989 / EAEC)</name>
    <dbReference type="NCBI Taxonomy" id="585055"/>
    <lineage>
        <taxon>Bacteria</taxon>
        <taxon>Pseudomonadati</taxon>
        <taxon>Pseudomonadota</taxon>
        <taxon>Gammaproteobacteria</taxon>
        <taxon>Enterobacterales</taxon>
        <taxon>Enterobacteriaceae</taxon>
        <taxon>Escherichia</taxon>
    </lineage>
</organism>
<gene>
    <name evidence="2" type="primary">dgoD</name>
    <name type="ordered locus">EC55989_4161</name>
</gene>
<feature type="chain" id="PRO_1000165268" description="D-galactonate dehydratase">
    <location>
        <begin position="1"/>
        <end position="382"/>
    </location>
</feature>
<feature type="active site" description="Proton donor" evidence="1">
    <location>
        <position position="185"/>
    </location>
</feature>
<feature type="active site" description="Proton acceptor" evidence="1">
    <location>
        <position position="285"/>
    </location>
</feature>
<feature type="binding site" evidence="2">
    <location>
        <position position="183"/>
    </location>
    <ligand>
        <name>Mg(2+)</name>
        <dbReference type="ChEBI" id="CHEBI:18420"/>
    </ligand>
</feature>
<feature type="binding site" evidence="2">
    <location>
        <position position="209"/>
    </location>
    <ligand>
        <name>Mg(2+)</name>
        <dbReference type="ChEBI" id="CHEBI:18420"/>
    </ligand>
</feature>
<feature type="binding site" evidence="2">
    <location>
        <position position="235"/>
    </location>
    <ligand>
        <name>Mg(2+)</name>
        <dbReference type="ChEBI" id="CHEBI:18420"/>
    </ligand>
</feature>
<feature type="site" description="Increases basicity of active site His" evidence="2">
    <location>
        <position position="258"/>
    </location>
</feature>
<feature type="site" description="Transition state stabilizer" evidence="2">
    <location>
        <position position="310"/>
    </location>
</feature>
<sequence length="382" mass="42523">MKITKITTYRLPPRWMFLKIETDEGVVGWGEPVIEGRARTVEAAVHELGDYLIGQDPSRINDLWQVMYRAGFYRGGPILMSAIAGIDQALWDIKGKVLNAPVWQLMGGLVRDKIKAYSWVGGDRPADVIDGIKTLREIGFDTFKLNGCEELGLIDNSRAVDAAVNTVAQIREAFGNQIEFGLDFHGRVSAPMAKVLIKELEPYRPLFIEEPVLAEQAEYYPKLAAQTHIPLAAGERMFSRFDFKRVLEAGGISILQPDLSHAGGITECYKIAGMAEAYDVTLAPHCPLGPIALAACLHIDFVSYNAVLQEQSMGIHYNKGAELLDFVKNKEDFSMVGGFFKPLTKPGLGVEIDEAKVIEFSKNAPDWRNPLWRHEDNSVAEW</sequence>
<reference key="1">
    <citation type="journal article" date="2009" name="PLoS Genet.">
        <title>Organised genome dynamics in the Escherichia coli species results in highly diverse adaptive paths.</title>
        <authorList>
            <person name="Touchon M."/>
            <person name="Hoede C."/>
            <person name="Tenaillon O."/>
            <person name="Barbe V."/>
            <person name="Baeriswyl S."/>
            <person name="Bidet P."/>
            <person name="Bingen E."/>
            <person name="Bonacorsi S."/>
            <person name="Bouchier C."/>
            <person name="Bouvet O."/>
            <person name="Calteau A."/>
            <person name="Chiapello H."/>
            <person name="Clermont O."/>
            <person name="Cruveiller S."/>
            <person name="Danchin A."/>
            <person name="Diard M."/>
            <person name="Dossat C."/>
            <person name="Karoui M.E."/>
            <person name="Frapy E."/>
            <person name="Garry L."/>
            <person name="Ghigo J.M."/>
            <person name="Gilles A.M."/>
            <person name="Johnson J."/>
            <person name="Le Bouguenec C."/>
            <person name="Lescat M."/>
            <person name="Mangenot S."/>
            <person name="Martinez-Jehanne V."/>
            <person name="Matic I."/>
            <person name="Nassif X."/>
            <person name="Oztas S."/>
            <person name="Petit M.A."/>
            <person name="Pichon C."/>
            <person name="Rouy Z."/>
            <person name="Ruf C.S."/>
            <person name="Schneider D."/>
            <person name="Tourret J."/>
            <person name="Vacherie B."/>
            <person name="Vallenet D."/>
            <person name="Medigue C."/>
            <person name="Rocha E.P.C."/>
            <person name="Denamur E."/>
        </authorList>
    </citation>
    <scope>NUCLEOTIDE SEQUENCE [LARGE SCALE GENOMIC DNA]</scope>
    <source>
        <strain>55989 / EAEC</strain>
    </source>
</reference>
<dbReference type="EC" id="4.2.1.6" evidence="2"/>
<dbReference type="EMBL" id="CU928145">
    <property type="protein sequence ID" value="CAV00741.1"/>
    <property type="molecule type" value="Genomic_DNA"/>
</dbReference>
<dbReference type="RefSeq" id="WP_000705001.1">
    <property type="nucleotide sequence ID" value="NC_011748.1"/>
</dbReference>
<dbReference type="SMR" id="B7L836"/>
<dbReference type="GeneID" id="75205406"/>
<dbReference type="KEGG" id="eck:EC55989_4161"/>
<dbReference type="HOGENOM" id="CLU_030273_3_2_6"/>
<dbReference type="UniPathway" id="UPA00081">
    <property type="reaction ID" value="UER00518"/>
</dbReference>
<dbReference type="Proteomes" id="UP000000746">
    <property type="component" value="Chromosome"/>
</dbReference>
<dbReference type="GO" id="GO:0008869">
    <property type="term" value="F:galactonate dehydratase activity"/>
    <property type="evidence" value="ECO:0007669"/>
    <property type="project" value="UniProtKB-UniRule"/>
</dbReference>
<dbReference type="GO" id="GO:0000287">
    <property type="term" value="F:magnesium ion binding"/>
    <property type="evidence" value="ECO:0007669"/>
    <property type="project" value="UniProtKB-UniRule"/>
</dbReference>
<dbReference type="GO" id="GO:0009063">
    <property type="term" value="P:amino acid catabolic process"/>
    <property type="evidence" value="ECO:0007669"/>
    <property type="project" value="InterPro"/>
</dbReference>
<dbReference type="GO" id="GO:0034194">
    <property type="term" value="P:D-galactonate catabolic process"/>
    <property type="evidence" value="ECO:0007669"/>
    <property type="project" value="UniProtKB-UniRule"/>
</dbReference>
<dbReference type="CDD" id="cd03325">
    <property type="entry name" value="D-galactonate_dehydratase"/>
    <property type="match status" value="1"/>
</dbReference>
<dbReference type="FunFam" id="3.20.20.120:FF:000008">
    <property type="entry name" value="D-galactonate dehydratase"/>
    <property type="match status" value="1"/>
</dbReference>
<dbReference type="FunFam" id="3.30.390.10:FF:000003">
    <property type="entry name" value="D-galactonate dehydratase"/>
    <property type="match status" value="1"/>
</dbReference>
<dbReference type="Gene3D" id="3.20.20.120">
    <property type="entry name" value="Enolase-like C-terminal domain"/>
    <property type="match status" value="1"/>
</dbReference>
<dbReference type="Gene3D" id="3.30.390.10">
    <property type="entry name" value="Enolase-like, N-terminal domain"/>
    <property type="match status" value="1"/>
</dbReference>
<dbReference type="HAMAP" id="MF_01289">
    <property type="entry name" value="Galacton_dehydrat"/>
    <property type="match status" value="1"/>
</dbReference>
<dbReference type="InterPro" id="IPR034593">
    <property type="entry name" value="DgoD-like"/>
</dbReference>
<dbReference type="InterPro" id="IPR036849">
    <property type="entry name" value="Enolase-like_C_sf"/>
</dbReference>
<dbReference type="InterPro" id="IPR029017">
    <property type="entry name" value="Enolase-like_N"/>
</dbReference>
<dbReference type="InterPro" id="IPR029065">
    <property type="entry name" value="Enolase_C-like"/>
</dbReference>
<dbReference type="InterPro" id="IPR023592">
    <property type="entry name" value="Galactonate_deHydtase"/>
</dbReference>
<dbReference type="InterPro" id="IPR018110">
    <property type="entry name" value="Mandel_Rmase/mucon_lact_enz_CS"/>
</dbReference>
<dbReference type="InterPro" id="IPR013342">
    <property type="entry name" value="Mandelate_racemase_C"/>
</dbReference>
<dbReference type="InterPro" id="IPR013341">
    <property type="entry name" value="Mandelate_racemase_N_dom"/>
</dbReference>
<dbReference type="NCBIfam" id="NF010624">
    <property type="entry name" value="PRK14017.1"/>
    <property type="match status" value="1"/>
</dbReference>
<dbReference type="PANTHER" id="PTHR48080:SF2">
    <property type="entry name" value="D-GALACTONATE DEHYDRATASE"/>
    <property type="match status" value="1"/>
</dbReference>
<dbReference type="PANTHER" id="PTHR48080">
    <property type="entry name" value="D-GALACTONATE DEHYDRATASE-RELATED"/>
    <property type="match status" value="1"/>
</dbReference>
<dbReference type="Pfam" id="PF13378">
    <property type="entry name" value="MR_MLE_C"/>
    <property type="match status" value="1"/>
</dbReference>
<dbReference type="Pfam" id="PF02746">
    <property type="entry name" value="MR_MLE_N"/>
    <property type="match status" value="1"/>
</dbReference>
<dbReference type="SFLD" id="SFLDF00003">
    <property type="entry name" value="D-galactonate_dehydratase"/>
    <property type="match status" value="1"/>
</dbReference>
<dbReference type="SFLD" id="SFLDS00001">
    <property type="entry name" value="Enolase"/>
    <property type="match status" value="1"/>
</dbReference>
<dbReference type="SMART" id="SM00922">
    <property type="entry name" value="MR_MLE"/>
    <property type="match status" value="1"/>
</dbReference>
<dbReference type="SUPFAM" id="SSF51604">
    <property type="entry name" value="Enolase C-terminal domain-like"/>
    <property type="match status" value="1"/>
</dbReference>
<dbReference type="SUPFAM" id="SSF54826">
    <property type="entry name" value="Enolase N-terminal domain-like"/>
    <property type="match status" value="1"/>
</dbReference>
<dbReference type="PROSITE" id="PS00908">
    <property type="entry name" value="MR_MLE_1"/>
    <property type="match status" value="1"/>
</dbReference>
<dbReference type="PROSITE" id="PS00909">
    <property type="entry name" value="MR_MLE_2"/>
    <property type="match status" value="1"/>
</dbReference>
<accession>B7L836</accession>
<evidence type="ECO:0000250" key="1"/>
<evidence type="ECO:0000255" key="2">
    <source>
        <dbReference type="HAMAP-Rule" id="MF_01289"/>
    </source>
</evidence>